<keyword id="KW-0877">Alternative promoter usage</keyword>
<keyword id="KW-0025">Alternative splicing</keyword>
<keyword id="KW-1003">Cell membrane</keyword>
<keyword id="KW-0903">Direct protein sequencing</keyword>
<keyword id="KW-1015">Disulfide bond</keyword>
<keyword id="KW-0245">EGF-like domain</keyword>
<keyword id="KW-0325">Glycoprotein</keyword>
<keyword id="KW-0378">Hydrolase</keyword>
<keyword id="KW-0395">Inflammatory response</keyword>
<keyword id="KW-0472">Membrane</keyword>
<keyword id="KW-0479">Metal-binding</keyword>
<keyword id="KW-0482">Metalloprotease</keyword>
<keyword id="KW-0597">Phosphoprotein</keyword>
<keyword id="KW-0645">Protease</keyword>
<keyword id="KW-1185">Reference proteome</keyword>
<keyword id="KW-0964">Secreted</keyword>
<keyword id="KW-0732">Signal</keyword>
<keyword id="KW-0812">Transmembrane</keyword>
<keyword id="KW-1133">Transmembrane helix</keyword>
<keyword id="KW-0862">Zinc</keyword>
<keyword id="KW-0865">Zymogen</keyword>
<accession>Q61847</accession>
<accession>Q059K0</accession>
<evidence type="ECO:0000250" key="1"/>
<evidence type="ECO:0000250" key="2">
    <source>
        <dbReference type="UniProtKB" id="Q16820"/>
    </source>
</evidence>
<evidence type="ECO:0000255" key="3"/>
<evidence type="ECO:0000255" key="4">
    <source>
        <dbReference type="PROSITE-ProRule" id="PRU00076"/>
    </source>
</evidence>
<evidence type="ECO:0000255" key="5">
    <source>
        <dbReference type="PROSITE-ProRule" id="PRU00128"/>
    </source>
</evidence>
<evidence type="ECO:0000255" key="6">
    <source>
        <dbReference type="PROSITE-ProRule" id="PRU00129"/>
    </source>
</evidence>
<evidence type="ECO:0000255" key="7">
    <source>
        <dbReference type="PROSITE-ProRule" id="PRU01211"/>
    </source>
</evidence>
<evidence type="ECO:0000269" key="8">
    <source>
    </source>
</evidence>
<evidence type="ECO:0000269" key="9">
    <source>
    </source>
</evidence>
<evidence type="ECO:0000269" key="10">
    <source>
    </source>
</evidence>
<evidence type="ECO:0000269" key="11">
    <source>
    </source>
</evidence>
<evidence type="ECO:0000303" key="12">
    <source>
    </source>
</evidence>
<evidence type="ECO:0000305" key="13"/>
<name>MEP1B_MOUSE</name>
<sequence>MDARHQPWFLVFATFLLVSGLPAPEKFVKDIDGGIDQDIFDINQGLGLDLFEGDIKLEANGKNSIIGDHKRWPHTIPYVLEDSLEMNAKGVILNAFERYRLKTCIDFKPWSGEANYISVFKGSGCWSSVGNIHAGKQELSIGTNCDRIATVQHEFLHALGFWHEQSRADRDDYVIIVWDRIQPGKEHNFNIYNDSVSDSLNVPYDYTSVMHYSKTAFQNGTESTIVTRISEFEDVIGQRMDFSDYDLLKLNQLYNCTSSLSFMDSCDFELENICGMIQSSGDSADWQRVSQVLSGPESDHSKMGQCKDSGFFMHFNTSILNEGATAMLESRLLYPKRGFQCLEFYLYNSGSGNDQLNIYTREYTTGQQGGVLTLQRQIKEVPIGSWQLHYVTLQVTKKFRVVFEGLRGPGTSSGGLSIDDINLSETRCPHHIWHIQNFTQILGGQDTSVYSPPFYSSKGYAFQIYMDLRSSTNVGIYFHLISGANDDQLQWPCPWQQATMTLLDQNPDIRQRMFNQRSITTDPTMTSDNGSYFWDRPSKVGVTDVFPNGTQFSRGIGYGTTVFITRERLKSREFIKGDDIYILLTVEDISHLNSTSAVPDPVPTLAVHNACSEVVCQNGGICVVQDGRAECKCPAGEDWWYMGKRCEKRGSTRDTVIIAVSSTVTVFAVMLIITLVSVYCTRRKYRKKARANTAAMTLENQHAF</sequence>
<feature type="signal peptide" evidence="3">
    <location>
        <begin position="1"/>
        <end position="20"/>
    </location>
</feature>
<feature type="propeptide" id="PRO_0000028885" evidence="1">
    <location>
        <begin position="21"/>
        <end position="64"/>
    </location>
</feature>
<feature type="chain" id="PRO_0000028886" description="Meprin A subunit beta">
    <location>
        <begin position="65"/>
        <end position="704"/>
    </location>
</feature>
<feature type="topological domain" description="Extracellular" evidence="3">
    <location>
        <begin position="21"/>
        <end position="654"/>
    </location>
</feature>
<feature type="transmembrane region" description="Helical" evidence="3">
    <location>
        <begin position="655"/>
        <end position="678"/>
    </location>
</feature>
<feature type="topological domain" description="Cytoplasmic" evidence="3">
    <location>
        <begin position="679"/>
        <end position="704"/>
    </location>
</feature>
<feature type="domain" description="Peptidase M12A" evidence="7">
    <location>
        <begin position="63"/>
        <end position="257"/>
    </location>
</feature>
<feature type="domain" description="MAM" evidence="5">
    <location>
        <begin position="261"/>
        <end position="430"/>
    </location>
</feature>
<feature type="domain" description="MATH" evidence="6">
    <location>
        <begin position="431"/>
        <end position="586"/>
    </location>
</feature>
<feature type="domain" description="EGF-like" evidence="4">
    <location>
        <begin position="607"/>
        <end position="647"/>
    </location>
</feature>
<feature type="active site" evidence="7">
    <location>
        <position position="154"/>
    </location>
</feature>
<feature type="binding site" evidence="7">
    <location>
        <position position="153"/>
    </location>
    <ligand>
        <name>Zn(2+)</name>
        <dbReference type="ChEBI" id="CHEBI:29105"/>
        <note>catalytic</note>
    </ligand>
</feature>
<feature type="binding site" evidence="7">
    <location>
        <position position="157"/>
    </location>
    <ligand>
        <name>Zn(2+)</name>
        <dbReference type="ChEBI" id="CHEBI:29105"/>
        <note>catalytic</note>
    </ligand>
</feature>
<feature type="binding site" evidence="7">
    <location>
        <position position="163"/>
    </location>
    <ligand>
        <name>Zn(2+)</name>
        <dbReference type="ChEBI" id="CHEBI:29105"/>
        <note>catalytic</note>
    </ligand>
</feature>
<feature type="site" description="Mediates preference for acidic residues at subsite P1'" evidence="1">
    <location>
        <position position="239"/>
    </location>
</feature>
<feature type="modified residue" description="Phosphothreonine" evidence="2">
    <location>
        <position position="697"/>
    </location>
</feature>
<feature type="glycosylation site" description="N-linked (GlcNAc...) asparagine" evidence="3">
    <location>
        <position position="193"/>
    </location>
</feature>
<feature type="glycosylation site" description="N-linked (GlcNAc...) asparagine" evidence="3">
    <location>
        <position position="219"/>
    </location>
</feature>
<feature type="glycosylation site" description="N-linked (GlcNAc...) asparagine" evidence="3">
    <location>
        <position position="255"/>
    </location>
</feature>
<feature type="glycosylation site" description="N-linked (GlcNAc...) asparagine" evidence="3">
    <location>
        <position position="316"/>
    </location>
</feature>
<feature type="glycosylation site" description="N-linked (GlcNAc...) asparagine" evidence="3">
    <location>
        <position position="422"/>
    </location>
</feature>
<feature type="glycosylation site" description="N-linked (GlcNAc...) asparagine" evidence="3">
    <location>
        <position position="437"/>
    </location>
</feature>
<feature type="glycosylation site" description="N-linked (GlcNAc...) asparagine" evidence="3">
    <location>
        <position position="529"/>
    </location>
</feature>
<feature type="glycosylation site" description="N-linked (GlcNAc...) asparagine" evidence="3">
    <location>
        <position position="548"/>
    </location>
</feature>
<feature type="glycosylation site" description="N-linked (GlcNAc...) asparagine" evidence="3">
    <location>
        <position position="593"/>
    </location>
</feature>
<feature type="disulfide bond" evidence="7">
    <location>
        <begin position="104"/>
        <end position="256"/>
    </location>
</feature>
<feature type="disulfide bond" evidence="7">
    <location>
        <begin position="125"/>
        <end position="145"/>
    </location>
</feature>
<feature type="disulfide bond" evidence="4">
    <location>
        <begin position="266"/>
        <end position="428"/>
    </location>
</feature>
<feature type="disulfide bond" description="Interchain" evidence="4">
    <location>
        <position position="274"/>
    </location>
</feature>
<feature type="disulfide bond" description="Interchain" evidence="4">
    <location>
        <position position="306"/>
    </location>
</feature>
<feature type="disulfide bond" description="Interchain" evidence="4">
    <location>
        <position position="493"/>
    </location>
</feature>
<feature type="disulfide bond" evidence="4">
    <location>
        <begin position="611"/>
        <end position="622"/>
    </location>
</feature>
<feature type="disulfide bond" evidence="4">
    <location>
        <begin position="616"/>
        <end position="631"/>
    </location>
</feature>
<feature type="disulfide bond" evidence="4">
    <location>
        <begin position="633"/>
        <end position="646"/>
    </location>
</feature>
<feature type="splice variant" id="VSP_005460" description="In isoform 2." evidence="12">
    <original>MDARHQPWFLVFATFLLVSGLPAPEKF</original>
    <variation>MNSTAGPASRSRHSFKCRMKLLKAPRDGMYMMTFG</variation>
    <location>
        <begin position="1"/>
        <end position="27"/>
    </location>
</feature>
<feature type="sequence conflict" description="In Ref. 1; AAA75234." evidence="13" ref="1">
    <original>V</original>
    <variation>A</variation>
    <location>
        <position position="18"/>
    </location>
</feature>
<feature type="sequence conflict" description="In Ref. 5; AA sequence." evidence="13" ref="5">
    <original>K</original>
    <variation>G</variation>
    <location>
        <position position="26"/>
    </location>
</feature>
<feature type="sequence conflict" description="In Ref. 5; AA sequence." evidence="13" ref="5">
    <original>K</original>
    <variation>S</variation>
    <location>
        <position position="29"/>
    </location>
</feature>
<feature type="sequence conflict" description="In Ref. 1; AAA75234 and 2; no nucleotide entry." evidence="13" ref="1 2">
    <original>S</original>
    <variation>Y</variation>
    <location>
        <position position="470"/>
    </location>
</feature>
<organism>
    <name type="scientific">Mus musculus</name>
    <name type="common">Mouse</name>
    <dbReference type="NCBI Taxonomy" id="10090"/>
    <lineage>
        <taxon>Eukaryota</taxon>
        <taxon>Metazoa</taxon>
        <taxon>Chordata</taxon>
        <taxon>Craniata</taxon>
        <taxon>Vertebrata</taxon>
        <taxon>Euteleostomi</taxon>
        <taxon>Mammalia</taxon>
        <taxon>Eutheria</taxon>
        <taxon>Euarchontoglires</taxon>
        <taxon>Glires</taxon>
        <taxon>Rodentia</taxon>
        <taxon>Myomorpha</taxon>
        <taxon>Muroidea</taxon>
        <taxon>Muridae</taxon>
        <taxon>Murinae</taxon>
        <taxon>Mus</taxon>
        <taxon>Mus</taxon>
    </lineage>
</organism>
<proteinExistence type="evidence at protein level"/>
<reference key="1">
    <citation type="journal article" date="1993" name="J. Biol. Chem.">
        <title>Cloning, expression, and chromosomal localization of the mouse meprin beta subunit.</title>
        <authorList>
            <person name="Gorbea C.M."/>
            <person name="Marchand P."/>
            <person name="Jiang W."/>
            <person name="Copeland N.G."/>
            <person name="Gilbert D.J."/>
            <person name="Jenkins N.A."/>
            <person name="Bond J.S."/>
        </authorList>
    </citation>
    <scope>NUCLEOTIDE SEQUENCE [MRNA] (ISOFORM 1)</scope>
    <scope>PROTEIN SEQUENCE OF 65-88; 96-109; 329-345 AND 541-549</scope>
    <source>
        <tissue>Kidney</tissue>
    </source>
</reference>
<reference key="2">
    <citation type="journal article" date="1996" name="J. Biol. Chem.">
        <title>A novel meprin beta' mRNA in mouse embryonal and human colon carcinoma cells.</title>
        <authorList>
            <person name="Dietrich J.M."/>
            <person name="Bond J.S."/>
            <person name="Jiang W."/>
        </authorList>
    </citation>
    <scope>NUCLEOTIDE SEQUENCE [MRNA] (ISOFORM 2)</scope>
    <source>
        <tissue>Kidney</tissue>
    </source>
</reference>
<reference key="3">
    <citation type="submission" date="2005-07" db="EMBL/GenBank/DDBJ databases">
        <authorList>
            <person name="Mural R.J."/>
            <person name="Adams M.D."/>
            <person name="Myers E.W."/>
            <person name="Smith H.O."/>
            <person name="Venter J.C."/>
        </authorList>
    </citation>
    <scope>NUCLEOTIDE SEQUENCE [LARGE SCALE GENOMIC DNA] (ISOFORM 1)</scope>
</reference>
<reference key="4">
    <citation type="journal article" date="2004" name="Genome Res.">
        <title>The status, quality, and expansion of the NIH full-length cDNA project: the Mammalian Gene Collection (MGC).</title>
        <authorList>
            <consortium name="The MGC Project Team"/>
        </authorList>
    </citation>
    <scope>NUCLEOTIDE SEQUENCE [LARGE SCALE MRNA] (ISOFORM 1)</scope>
</reference>
<reference key="5">
    <citation type="journal article" date="1991" name="J. Biol. Chem.">
        <title>Meprin-A and -B. Cell surface endopeptidases of the mouse kidney.</title>
        <authorList>
            <person name="Kounnas M.Z."/>
            <person name="Wolz R.L."/>
            <person name="Gorbea C.M."/>
            <person name="Bond J.S."/>
        </authorList>
    </citation>
    <scope>PROTEIN SEQUENCE OF 21-30 (ISOFORM 1)</scope>
    <scope>CATALYTIC ACTIVITY</scope>
    <scope>ACTIVITY REGULATION</scope>
    <scope>BIOPHYSICOCHEMICAL PROPERTIES</scope>
    <scope>GLYCOSYLATION</scope>
    <source>
        <strain>C3H/He</strain>
        <tissue>Kidney</tissue>
    </source>
</reference>
<reference key="6">
    <citation type="journal article" date="1991" name="Arch. Biochem. Biophys.">
        <title>Homo- and heterotetrameric forms of the membrane-bound metalloendopeptidases meprin A and B.</title>
        <authorList>
            <person name="Gorbea C.M."/>
            <person name="Flannery A.V."/>
            <person name="Bond J.S."/>
        </authorList>
    </citation>
    <scope>SUBUNIT</scope>
</reference>
<reference key="7">
    <citation type="journal article" date="2001" name="J. Biol. Chem.">
        <title>Marked differences between metalloproteases meprin A and B in substrate and peptide bond specificity.</title>
        <authorList>
            <person name="Bertenshaw G.P."/>
            <person name="Turk B.E."/>
            <person name="Hubbard S.J."/>
            <person name="Matters G.L."/>
            <person name="Bylander J.E."/>
            <person name="Crisman J.M."/>
            <person name="Cantley L.C."/>
            <person name="Bond J.S."/>
        </authorList>
    </citation>
    <scope>CATALYTIC ACTIVITY</scope>
</reference>
<reference key="8">
    <citation type="journal article" date="2005" name="J. Immunol.">
        <title>Mannan-binding protein blocks the activation of metalloproteases meprin alpha and beta.</title>
        <authorList>
            <person name="Hirano M."/>
            <person name="Ma B.Y."/>
            <person name="Kawasaki N."/>
            <person name="Okimura K."/>
            <person name="Baba M."/>
            <person name="Nakagawa T."/>
            <person name="Miwa K."/>
            <person name="Kawasaki N."/>
            <person name="Oka S."/>
            <person name="Kawasaki T."/>
        </authorList>
    </citation>
    <scope>INTERACTION WITH MBL2</scope>
</reference>
<reference key="9">
    <citation type="journal article" date="2010" name="Cell">
        <title>A tissue-specific atlas of mouse protein phosphorylation and expression.</title>
        <authorList>
            <person name="Huttlin E.L."/>
            <person name="Jedrychowski M.P."/>
            <person name="Elias J.E."/>
            <person name="Goswami T."/>
            <person name="Rad R."/>
            <person name="Beausoleil S.A."/>
            <person name="Villen J."/>
            <person name="Haas W."/>
            <person name="Sowa M.E."/>
            <person name="Gygi S.P."/>
        </authorList>
    </citation>
    <scope>IDENTIFICATION BY MASS SPECTROMETRY [LARGE SCALE ANALYSIS]</scope>
    <source>
        <tissue>Kidney</tissue>
    </source>
</reference>
<gene>
    <name type="primary">Mep1b</name>
    <name type="synonym">Mep-1b</name>
</gene>
<protein>
    <recommendedName>
        <fullName>Meprin A subunit beta</fullName>
        <ecNumber>3.4.24.63</ecNumber>
    </recommendedName>
    <alternativeName>
        <fullName>Endopeptidase-2</fullName>
    </alternativeName>
    <alternativeName>
        <fullName>Meprin B</fullName>
    </alternativeName>
</protein>
<comment type="function">
    <text evidence="2 8">Membrane metallopeptidase that sheds many membrane-bound proteins. Exhibits a strong preference for acidic amino acids at the P1' position (PubMed:11278902). Known substrates include: FGF19, VGFA, IL1B, IL18, procollagen I and III, E-cadherin, KLK7, gastrin, ADAM10, tenascin-C. The presence of several pro-inflammatory cytokine among substrates implicate MEP1B in inflammation. It is also involved in tissue remodeling due to its capability to degrade extracellular matrix components (By similarity).</text>
</comment>
<comment type="catalytic activity">
    <reaction evidence="8 10">
        <text>Hydrolysis of proteins, including azocasein, and peptides. Hydrolysis of 5-His-|-Leu-6, 6-Leu-|-Cys-7, 14-Ala-|-Leu-15 and 19-Cys-|-Gly-20 bonds in insulin B chain.</text>
        <dbReference type="EC" id="3.4.24.63"/>
    </reaction>
</comment>
<comment type="cofactor">
    <cofactor evidence="7">
        <name>Zn(2+)</name>
        <dbReference type="ChEBI" id="CHEBI:29105"/>
    </cofactor>
    <text evidence="7">Binds 1 zinc ion per subunit.</text>
</comment>
<comment type="activity regulation">
    <text evidence="1 10">Strongly inhibited by fetuin-A/AHSG (By similarity). Inhibited by cysteine and by the metal ion chelators EDTA and 1,10-phenanthroline. Not inhibited by 3,4-dichloroisocourmarin, soybean trypsin inhibitor, or the cysteine proteinase inhibitors iodoacetic acid and E-64.</text>
</comment>
<comment type="biophysicochemical properties">
    <temperatureDependence>
        <text evidence="10">The half-life at 58 degrees Celsius is less than 3 minutes.</text>
    </temperatureDependence>
</comment>
<comment type="subunit">
    <text evidence="2 9 11">Homotetramer consisting of disulfide-linked beta subunits, or heterotetramer of two alpha and two beta subunits formed by non-covalent association of two disulfide-linked heterodimers. Interacts with MBL2 through its carbohydrate moiety. This interaction may inhibit its catalytic activity. Interacts with TSPAN8 (By similarity).</text>
</comment>
<comment type="subcellular location">
    <subcellularLocation>
        <location evidence="2">Cell membrane</location>
        <topology evidence="2">Single-pass type I membrane protein</topology>
    </subcellularLocation>
    <subcellularLocation>
        <location evidence="2">Secreted</location>
    </subcellularLocation>
    <text evidence="2">Homodimers are essentially membrane bound but may also be shed from the surface by ADAM-10 and ADAM-17.</text>
</comment>
<comment type="alternative products">
    <event type="alternative promoter"/>
    <event type="alternative splicing"/>
    <isoform>
        <id>Q61847-1</id>
        <name>1</name>
        <name>Beta</name>
        <sequence type="displayed"/>
    </isoform>
    <isoform>
        <id>Q61847-2</id>
        <name>2</name>
        <name>Beta'</name>
        <sequence type="described" ref="VSP_005460"/>
    </isoform>
</comment>
<comment type="tissue specificity">
    <text>Isoform 1 is expressed in kidney, intestinal brush borders, and salivary ducts. Isoform 2 has been found in carcinoma cells.</text>
</comment>
<comment type="induction">
    <text>By retinoic acid.</text>
</comment>
<comment type="PTM">
    <text evidence="1">Proteolytically activated by trypsin in the intestinal lumen and kallikrein-related peptidases in other tissues.</text>
</comment>
<comment type="PTM">
    <text evidence="10">N-glycosylated; contains high mannose and/or complex biantennary structures.</text>
</comment>
<comment type="PTM">
    <text evidence="2">Phosphorylated by PKC at multiple sites of its cytoplasmic part. Phosphorylation dcreases activity at the cell surface, leading to diminished substrate cleavage.</text>
</comment>
<dbReference type="EC" id="3.4.24.63"/>
<dbReference type="EMBL" id="L15193">
    <property type="protein sequence ID" value="AAA75234.1"/>
    <property type="molecule type" value="mRNA"/>
</dbReference>
<dbReference type="EMBL" id="CH466557">
    <property type="protein sequence ID" value="EDK96962.1"/>
    <property type="molecule type" value="Genomic_DNA"/>
</dbReference>
<dbReference type="EMBL" id="BC125627">
    <property type="protein sequence ID" value="AAI25628.1"/>
    <property type="molecule type" value="mRNA"/>
</dbReference>
<dbReference type="EMBL" id="BC145979">
    <property type="protein sequence ID" value="AAI45980.1"/>
    <property type="molecule type" value="mRNA"/>
</dbReference>
<dbReference type="CCDS" id="CCDS37747.1">
    <molecule id="Q61847-1"/>
</dbReference>
<dbReference type="PIR" id="A48040">
    <property type="entry name" value="A48040"/>
</dbReference>
<dbReference type="RefSeq" id="NP_032612.2">
    <molecule id="Q61847-1"/>
    <property type="nucleotide sequence ID" value="NM_008586.2"/>
</dbReference>
<dbReference type="SMR" id="Q61847"/>
<dbReference type="BioGRID" id="201397">
    <property type="interactions" value="3"/>
</dbReference>
<dbReference type="FunCoup" id="Q61847">
    <property type="interactions" value="510"/>
</dbReference>
<dbReference type="IntAct" id="Q61847">
    <property type="interactions" value="1"/>
</dbReference>
<dbReference type="STRING" id="10090.ENSMUSP00000080866"/>
<dbReference type="MEROPS" id="M12.004"/>
<dbReference type="GlyCosmos" id="Q61847">
    <property type="glycosylation" value="9 sites, 14 glycans"/>
</dbReference>
<dbReference type="GlyGen" id="Q61847">
    <property type="glycosylation" value="11 sites"/>
</dbReference>
<dbReference type="PhosphoSitePlus" id="Q61847"/>
<dbReference type="jPOST" id="Q61847"/>
<dbReference type="PaxDb" id="10090-ENSMUSP00000080866"/>
<dbReference type="PeptideAtlas" id="Q61847"/>
<dbReference type="ProteomicsDB" id="295925">
    <molecule id="Q61847-1"/>
</dbReference>
<dbReference type="ProteomicsDB" id="295926">
    <molecule id="Q61847-2"/>
</dbReference>
<dbReference type="Antibodypedia" id="22196">
    <property type="antibodies" value="69 antibodies from 18 providers"/>
</dbReference>
<dbReference type="DNASU" id="17288"/>
<dbReference type="Ensembl" id="ENSMUST00000082235.5">
    <molecule id="Q61847-1"/>
    <property type="protein sequence ID" value="ENSMUSP00000080866.5"/>
    <property type="gene ID" value="ENSMUSG00000024313.9"/>
</dbReference>
<dbReference type="GeneID" id="17288"/>
<dbReference type="KEGG" id="mmu:17288"/>
<dbReference type="UCSC" id="uc008eff.1">
    <molecule id="Q61847-1"/>
    <property type="organism name" value="mouse"/>
</dbReference>
<dbReference type="AGR" id="MGI:96964"/>
<dbReference type="CTD" id="4225"/>
<dbReference type="MGI" id="MGI:96964">
    <property type="gene designation" value="Mep1b"/>
</dbReference>
<dbReference type="VEuPathDB" id="HostDB:ENSMUSG00000024313"/>
<dbReference type="eggNOG" id="KOG3714">
    <property type="taxonomic scope" value="Eukaryota"/>
</dbReference>
<dbReference type="GeneTree" id="ENSGT00950000183111"/>
<dbReference type="HOGENOM" id="CLU_021966_0_0_1"/>
<dbReference type="InParanoid" id="Q61847"/>
<dbReference type="OMA" id="VYCTRKR"/>
<dbReference type="OrthoDB" id="291007at2759"/>
<dbReference type="PhylomeDB" id="Q61847"/>
<dbReference type="TreeFam" id="TF315280"/>
<dbReference type="BRENDA" id="3.4.24.63">
    <property type="organism ID" value="3474"/>
</dbReference>
<dbReference type="BioGRID-ORCS" id="17288">
    <property type="hits" value="1 hit in 77 CRISPR screens"/>
</dbReference>
<dbReference type="PRO" id="PR:Q61847"/>
<dbReference type="Proteomes" id="UP000000589">
    <property type="component" value="Chromosome 18"/>
</dbReference>
<dbReference type="RNAct" id="Q61847">
    <property type="molecule type" value="protein"/>
</dbReference>
<dbReference type="Bgee" id="ENSMUSG00000024313">
    <property type="expression patterns" value="Expressed in small intestine Peyer's patch and 54 other cell types or tissues"/>
</dbReference>
<dbReference type="ExpressionAtlas" id="Q61847">
    <property type="expression patterns" value="baseline and differential"/>
</dbReference>
<dbReference type="GO" id="GO:0005576">
    <property type="term" value="C:extracellular region"/>
    <property type="evidence" value="ECO:0007669"/>
    <property type="project" value="UniProtKB-SubCell"/>
</dbReference>
<dbReference type="GO" id="GO:0016020">
    <property type="term" value="C:membrane"/>
    <property type="evidence" value="ECO:0000314"/>
    <property type="project" value="MGI"/>
</dbReference>
<dbReference type="GO" id="GO:0017090">
    <property type="term" value="C:meprin A complex"/>
    <property type="evidence" value="ECO:0007669"/>
    <property type="project" value="Ensembl"/>
</dbReference>
<dbReference type="GO" id="GO:0005886">
    <property type="term" value="C:plasma membrane"/>
    <property type="evidence" value="ECO:0007669"/>
    <property type="project" value="UniProtKB-SubCell"/>
</dbReference>
<dbReference type="GO" id="GO:0042802">
    <property type="term" value="F:identical protein binding"/>
    <property type="evidence" value="ECO:0007669"/>
    <property type="project" value="Ensembl"/>
</dbReference>
<dbReference type="GO" id="GO:0004222">
    <property type="term" value="F:metalloendopeptidase activity"/>
    <property type="evidence" value="ECO:0007669"/>
    <property type="project" value="InterPro"/>
</dbReference>
<dbReference type="GO" id="GO:0008270">
    <property type="term" value="F:zinc ion binding"/>
    <property type="evidence" value="ECO:0007669"/>
    <property type="project" value="InterPro"/>
</dbReference>
<dbReference type="GO" id="GO:0006954">
    <property type="term" value="P:inflammatory response"/>
    <property type="evidence" value="ECO:0007669"/>
    <property type="project" value="UniProtKB-KW"/>
</dbReference>
<dbReference type="GO" id="GO:0006508">
    <property type="term" value="P:proteolysis"/>
    <property type="evidence" value="ECO:0007669"/>
    <property type="project" value="UniProtKB-KW"/>
</dbReference>
<dbReference type="CDD" id="cd00054">
    <property type="entry name" value="EGF_CA"/>
    <property type="match status" value="1"/>
</dbReference>
<dbReference type="CDD" id="cd06263">
    <property type="entry name" value="MAM"/>
    <property type="match status" value="1"/>
</dbReference>
<dbReference type="FunFam" id="2.10.25.10:FF:000363">
    <property type="entry name" value="Meprin A subunit"/>
    <property type="match status" value="1"/>
</dbReference>
<dbReference type="FunFam" id="2.60.120.200:FF:000037">
    <property type="entry name" value="Meprin A subunit"/>
    <property type="match status" value="1"/>
</dbReference>
<dbReference type="FunFam" id="2.60.210.10:FF:000009">
    <property type="entry name" value="Meprin A subunit"/>
    <property type="match status" value="1"/>
</dbReference>
<dbReference type="FunFam" id="3.40.390.10:FF:000015">
    <property type="entry name" value="Meprin A subunit"/>
    <property type="match status" value="1"/>
</dbReference>
<dbReference type="Gene3D" id="2.60.120.200">
    <property type="match status" value="1"/>
</dbReference>
<dbReference type="Gene3D" id="2.60.210.10">
    <property type="entry name" value="Apoptosis, Tumor Necrosis Factor Receptor Associated Protein 2, Chain A"/>
    <property type="match status" value="1"/>
</dbReference>
<dbReference type="Gene3D" id="3.40.390.10">
    <property type="entry name" value="Collagenase (Catalytic Domain)"/>
    <property type="match status" value="1"/>
</dbReference>
<dbReference type="Gene3D" id="2.10.25.10">
    <property type="entry name" value="Laminin"/>
    <property type="match status" value="1"/>
</dbReference>
<dbReference type="InterPro" id="IPR013320">
    <property type="entry name" value="ConA-like_dom_sf"/>
</dbReference>
<dbReference type="InterPro" id="IPR000742">
    <property type="entry name" value="EGF-like_dom"/>
</dbReference>
<dbReference type="InterPro" id="IPR000998">
    <property type="entry name" value="MAM_dom"/>
</dbReference>
<dbReference type="InterPro" id="IPR002083">
    <property type="entry name" value="MATH/TRAF_dom"/>
</dbReference>
<dbReference type="InterPro" id="IPR008294">
    <property type="entry name" value="Meprin"/>
</dbReference>
<dbReference type="InterPro" id="IPR024079">
    <property type="entry name" value="MetalloPept_cat_dom_sf"/>
</dbReference>
<dbReference type="InterPro" id="IPR001506">
    <property type="entry name" value="Peptidase_M12A"/>
</dbReference>
<dbReference type="InterPro" id="IPR006026">
    <property type="entry name" value="Peptidase_Metallo"/>
</dbReference>
<dbReference type="InterPro" id="IPR008974">
    <property type="entry name" value="TRAF-like"/>
</dbReference>
<dbReference type="PANTHER" id="PTHR10127">
    <property type="entry name" value="DISCOIDIN, CUB, EGF, LAMININ , AND ZINC METALLOPROTEASE DOMAIN CONTAINING"/>
    <property type="match status" value="1"/>
</dbReference>
<dbReference type="PANTHER" id="PTHR10127:SF814">
    <property type="entry name" value="MEPRIN A SUBUNIT BETA"/>
    <property type="match status" value="1"/>
</dbReference>
<dbReference type="Pfam" id="PF01400">
    <property type="entry name" value="Astacin"/>
    <property type="match status" value="1"/>
</dbReference>
<dbReference type="Pfam" id="PF00629">
    <property type="entry name" value="MAM"/>
    <property type="match status" value="1"/>
</dbReference>
<dbReference type="Pfam" id="PF22486">
    <property type="entry name" value="MATH_2"/>
    <property type="match status" value="1"/>
</dbReference>
<dbReference type="PIRSF" id="PIRSF001196">
    <property type="entry name" value="Meprin"/>
    <property type="match status" value="1"/>
</dbReference>
<dbReference type="PRINTS" id="PR00480">
    <property type="entry name" value="ASTACIN"/>
</dbReference>
<dbReference type="PRINTS" id="PR00020">
    <property type="entry name" value="MAMDOMAIN"/>
</dbReference>
<dbReference type="SMART" id="SM00137">
    <property type="entry name" value="MAM"/>
    <property type="match status" value="1"/>
</dbReference>
<dbReference type="SMART" id="SM00061">
    <property type="entry name" value="MATH"/>
    <property type="match status" value="1"/>
</dbReference>
<dbReference type="SMART" id="SM00235">
    <property type="entry name" value="ZnMc"/>
    <property type="match status" value="1"/>
</dbReference>
<dbReference type="SUPFAM" id="SSF49899">
    <property type="entry name" value="Concanavalin A-like lectins/glucanases"/>
    <property type="match status" value="1"/>
</dbReference>
<dbReference type="SUPFAM" id="SSF57196">
    <property type="entry name" value="EGF/Laminin"/>
    <property type="match status" value="1"/>
</dbReference>
<dbReference type="SUPFAM" id="SSF55486">
    <property type="entry name" value="Metalloproteases ('zincins'), catalytic domain"/>
    <property type="match status" value="1"/>
</dbReference>
<dbReference type="SUPFAM" id="SSF49599">
    <property type="entry name" value="TRAF domain-like"/>
    <property type="match status" value="1"/>
</dbReference>
<dbReference type="PROSITE" id="PS51864">
    <property type="entry name" value="ASTACIN"/>
    <property type="match status" value="1"/>
</dbReference>
<dbReference type="PROSITE" id="PS50026">
    <property type="entry name" value="EGF_3"/>
    <property type="match status" value="1"/>
</dbReference>
<dbReference type="PROSITE" id="PS00740">
    <property type="entry name" value="MAM_1"/>
    <property type="match status" value="1"/>
</dbReference>
<dbReference type="PROSITE" id="PS50060">
    <property type="entry name" value="MAM_2"/>
    <property type="match status" value="1"/>
</dbReference>
<dbReference type="PROSITE" id="PS50144">
    <property type="entry name" value="MATH"/>
    <property type="match status" value="1"/>
</dbReference>
<dbReference type="PROSITE" id="PS00142">
    <property type="entry name" value="ZINC_PROTEASE"/>
    <property type="match status" value="1"/>
</dbReference>